<feature type="chain" id="PRO_1000057882" description="N-(5'-phosphoribosyl)anthranilate isomerase">
    <location>
        <begin position="1"/>
        <end position="230"/>
    </location>
</feature>
<sequence length="230" mass="26014">MTEIKFCGMTRLSDALVAAENGANALGFIFYPRSPRYLPPEKARELIRRLPPEVIRVGVFVNEAVEKVKEIYHICGLDLVQLHGDENPDYCRRFPAPMLIRAVSPRNGADLAVLDRYSCRAFLLDRREGALYGGTGGISNWELGRRIRERFPLILAGGLNPENVMTAIENVLPHAVDINSGVESAPGIKDPEKIRAVLAAVRRYQGIRETEEERKEPERFRIFERTDEKI</sequence>
<name>TRPF_SYNAS</name>
<keyword id="KW-0028">Amino-acid biosynthesis</keyword>
<keyword id="KW-0057">Aromatic amino acid biosynthesis</keyword>
<keyword id="KW-0413">Isomerase</keyword>
<keyword id="KW-1185">Reference proteome</keyword>
<keyword id="KW-0822">Tryptophan biosynthesis</keyword>
<protein>
    <recommendedName>
        <fullName evidence="1">N-(5'-phosphoribosyl)anthranilate isomerase</fullName>
        <shortName evidence="1">PRAI</shortName>
        <ecNumber evidence="1">5.3.1.24</ecNumber>
    </recommendedName>
</protein>
<organism>
    <name type="scientific">Syntrophus aciditrophicus (strain SB)</name>
    <dbReference type="NCBI Taxonomy" id="56780"/>
    <lineage>
        <taxon>Bacteria</taxon>
        <taxon>Pseudomonadati</taxon>
        <taxon>Thermodesulfobacteriota</taxon>
        <taxon>Syntrophia</taxon>
        <taxon>Syntrophales</taxon>
        <taxon>Syntrophaceae</taxon>
        <taxon>Syntrophus</taxon>
    </lineage>
</organism>
<accession>Q2LUD8</accession>
<reference key="1">
    <citation type="journal article" date="2007" name="Proc. Natl. Acad. Sci. U.S.A.">
        <title>The genome of Syntrophus aciditrophicus: life at the thermodynamic limit of microbial growth.</title>
        <authorList>
            <person name="McInerney M.J."/>
            <person name="Rohlin L."/>
            <person name="Mouttaki H."/>
            <person name="Kim U."/>
            <person name="Krupp R.S."/>
            <person name="Rios-Hernandez L."/>
            <person name="Sieber J."/>
            <person name="Struchtemeyer C.G."/>
            <person name="Bhattacharyya A."/>
            <person name="Campbell J.W."/>
            <person name="Gunsalus R.P."/>
        </authorList>
    </citation>
    <scope>NUCLEOTIDE SEQUENCE [LARGE SCALE GENOMIC DNA]</scope>
    <source>
        <strain>SB</strain>
    </source>
</reference>
<dbReference type="EC" id="5.3.1.24" evidence="1"/>
<dbReference type="EMBL" id="CP000252">
    <property type="protein sequence ID" value="ABC77700.1"/>
    <property type="molecule type" value="Genomic_DNA"/>
</dbReference>
<dbReference type="RefSeq" id="WP_011417722.1">
    <property type="nucleotide sequence ID" value="NC_007759.1"/>
</dbReference>
<dbReference type="SMR" id="Q2LUD8"/>
<dbReference type="STRING" id="56780.SYN_01943"/>
<dbReference type="KEGG" id="sat:SYN_01943"/>
<dbReference type="eggNOG" id="COG0135">
    <property type="taxonomic scope" value="Bacteria"/>
</dbReference>
<dbReference type="HOGENOM" id="CLU_076364_2_0_7"/>
<dbReference type="InParanoid" id="Q2LUD8"/>
<dbReference type="OrthoDB" id="9796196at2"/>
<dbReference type="UniPathway" id="UPA00035">
    <property type="reaction ID" value="UER00042"/>
</dbReference>
<dbReference type="Proteomes" id="UP000001933">
    <property type="component" value="Chromosome"/>
</dbReference>
<dbReference type="GO" id="GO:0004640">
    <property type="term" value="F:phosphoribosylanthranilate isomerase activity"/>
    <property type="evidence" value="ECO:0007669"/>
    <property type="project" value="UniProtKB-UniRule"/>
</dbReference>
<dbReference type="GO" id="GO:0000162">
    <property type="term" value="P:L-tryptophan biosynthetic process"/>
    <property type="evidence" value="ECO:0007669"/>
    <property type="project" value="UniProtKB-UniRule"/>
</dbReference>
<dbReference type="CDD" id="cd00405">
    <property type="entry name" value="PRAI"/>
    <property type="match status" value="1"/>
</dbReference>
<dbReference type="FunFam" id="3.20.20.70:FF:000075">
    <property type="entry name" value="Tryptophan biosynthesis protein TRP1"/>
    <property type="match status" value="1"/>
</dbReference>
<dbReference type="Gene3D" id="3.20.20.70">
    <property type="entry name" value="Aldolase class I"/>
    <property type="match status" value="1"/>
</dbReference>
<dbReference type="HAMAP" id="MF_00135">
    <property type="entry name" value="PRAI"/>
    <property type="match status" value="1"/>
</dbReference>
<dbReference type="InterPro" id="IPR013785">
    <property type="entry name" value="Aldolase_TIM"/>
</dbReference>
<dbReference type="InterPro" id="IPR001240">
    <property type="entry name" value="PRAI_dom"/>
</dbReference>
<dbReference type="InterPro" id="IPR011060">
    <property type="entry name" value="RibuloseP-bd_barrel"/>
</dbReference>
<dbReference type="InterPro" id="IPR044643">
    <property type="entry name" value="TrpF_fam"/>
</dbReference>
<dbReference type="NCBIfam" id="NF002298">
    <property type="entry name" value="PRK01222.1-4"/>
    <property type="match status" value="1"/>
</dbReference>
<dbReference type="PANTHER" id="PTHR42894">
    <property type="entry name" value="N-(5'-PHOSPHORIBOSYL)ANTHRANILATE ISOMERASE"/>
    <property type="match status" value="1"/>
</dbReference>
<dbReference type="PANTHER" id="PTHR42894:SF1">
    <property type="entry name" value="N-(5'-PHOSPHORIBOSYL)ANTHRANILATE ISOMERASE"/>
    <property type="match status" value="1"/>
</dbReference>
<dbReference type="Pfam" id="PF00697">
    <property type="entry name" value="PRAI"/>
    <property type="match status" value="1"/>
</dbReference>
<dbReference type="SUPFAM" id="SSF51366">
    <property type="entry name" value="Ribulose-phoshate binding barrel"/>
    <property type="match status" value="1"/>
</dbReference>
<evidence type="ECO:0000255" key="1">
    <source>
        <dbReference type="HAMAP-Rule" id="MF_00135"/>
    </source>
</evidence>
<proteinExistence type="inferred from homology"/>
<gene>
    <name evidence="1" type="primary">trpF</name>
    <name type="ordered locus">SYNAS_18210</name>
    <name type="ORF">SYN_01943</name>
</gene>
<comment type="catalytic activity">
    <reaction evidence="1">
        <text>N-(5-phospho-beta-D-ribosyl)anthranilate = 1-(2-carboxyphenylamino)-1-deoxy-D-ribulose 5-phosphate</text>
        <dbReference type="Rhea" id="RHEA:21540"/>
        <dbReference type="ChEBI" id="CHEBI:18277"/>
        <dbReference type="ChEBI" id="CHEBI:58613"/>
        <dbReference type="EC" id="5.3.1.24"/>
    </reaction>
</comment>
<comment type="pathway">
    <text evidence="1">Amino-acid biosynthesis; L-tryptophan biosynthesis; L-tryptophan from chorismate: step 3/5.</text>
</comment>
<comment type="similarity">
    <text evidence="1">Belongs to the TrpF family.</text>
</comment>